<dbReference type="EMBL" id="DS544903">
    <property type="protein sequence ID" value="EDQ80663.1"/>
    <property type="status" value="ALT_INIT"/>
    <property type="molecule type" value="Genomic_DNA"/>
</dbReference>
<dbReference type="RefSeq" id="XP_001754693.1">
    <property type="nucleotide sequence ID" value="XM_001754641.1"/>
</dbReference>
<dbReference type="FunCoup" id="A9RKK4">
    <property type="interactions" value="1787"/>
</dbReference>
<dbReference type="PaxDb" id="3218-PP1S14_317V6.3"/>
<dbReference type="EnsemblPlants" id="Pp3c6_20660V3.1">
    <property type="protein sequence ID" value="Pp3c6_20660V3.1"/>
    <property type="gene ID" value="Pp3c6_20660"/>
</dbReference>
<dbReference type="EnsemblPlants" id="Pp3c6_20660V3.10">
    <property type="protein sequence ID" value="Pp3c6_20660V3.10"/>
    <property type="gene ID" value="Pp3c6_20660"/>
</dbReference>
<dbReference type="EnsemblPlants" id="Pp3c6_20660V3.11">
    <property type="protein sequence ID" value="Pp3c6_20660V3.11"/>
    <property type="gene ID" value="Pp3c6_20660"/>
</dbReference>
<dbReference type="EnsemblPlants" id="Pp3c6_20660V3.12">
    <property type="protein sequence ID" value="Pp3c6_20660V3.12"/>
    <property type="gene ID" value="Pp3c6_20660"/>
</dbReference>
<dbReference type="EnsemblPlants" id="Pp3c6_20660V3.2">
    <property type="protein sequence ID" value="Pp3c6_20660V3.2"/>
    <property type="gene ID" value="Pp3c6_20660"/>
</dbReference>
<dbReference type="EnsemblPlants" id="Pp3c6_20660V3.3">
    <property type="protein sequence ID" value="Pp3c6_20660V3.3"/>
    <property type="gene ID" value="Pp3c6_20660"/>
</dbReference>
<dbReference type="EnsemblPlants" id="Pp3c6_20660V3.4">
    <property type="protein sequence ID" value="Pp3c6_20660V3.4"/>
    <property type="gene ID" value="Pp3c6_20660"/>
</dbReference>
<dbReference type="EnsemblPlants" id="Pp3c6_20660V3.5">
    <property type="protein sequence ID" value="Pp3c6_20660V3.5"/>
    <property type="gene ID" value="Pp3c6_20660"/>
</dbReference>
<dbReference type="EnsemblPlants" id="Pp3c6_20660V3.6">
    <property type="protein sequence ID" value="Pp3c6_20660V3.6"/>
    <property type="gene ID" value="Pp3c6_20660"/>
</dbReference>
<dbReference type="EnsemblPlants" id="Pp3c6_20660V3.7">
    <property type="protein sequence ID" value="Pp3c6_20660V3.7"/>
    <property type="gene ID" value="Pp3c6_20660"/>
</dbReference>
<dbReference type="EnsemblPlants" id="Pp3c6_20660V3.8">
    <property type="protein sequence ID" value="Pp3c6_20660V3.8"/>
    <property type="gene ID" value="Pp3c6_20660"/>
</dbReference>
<dbReference type="EnsemblPlants" id="Pp3c6_20660V3.9">
    <property type="protein sequence ID" value="Pp3c6_20660V3.9"/>
    <property type="gene ID" value="Pp3c6_20660"/>
</dbReference>
<dbReference type="Gramene" id="Pp3c6_20660V3.1">
    <property type="protein sequence ID" value="Pp3c6_20660V3.1"/>
    <property type="gene ID" value="Pp3c6_20660"/>
</dbReference>
<dbReference type="Gramene" id="Pp3c6_20660V3.10">
    <property type="protein sequence ID" value="Pp3c6_20660V3.10"/>
    <property type="gene ID" value="Pp3c6_20660"/>
</dbReference>
<dbReference type="Gramene" id="Pp3c6_20660V3.11">
    <property type="protein sequence ID" value="Pp3c6_20660V3.11"/>
    <property type="gene ID" value="Pp3c6_20660"/>
</dbReference>
<dbReference type="Gramene" id="Pp3c6_20660V3.12">
    <property type="protein sequence ID" value="Pp3c6_20660V3.12"/>
    <property type="gene ID" value="Pp3c6_20660"/>
</dbReference>
<dbReference type="Gramene" id="Pp3c6_20660V3.2">
    <property type="protein sequence ID" value="Pp3c6_20660V3.2"/>
    <property type="gene ID" value="Pp3c6_20660"/>
</dbReference>
<dbReference type="Gramene" id="Pp3c6_20660V3.3">
    <property type="protein sequence ID" value="Pp3c6_20660V3.3"/>
    <property type="gene ID" value="Pp3c6_20660"/>
</dbReference>
<dbReference type="Gramene" id="Pp3c6_20660V3.4">
    <property type="protein sequence ID" value="Pp3c6_20660V3.4"/>
    <property type="gene ID" value="Pp3c6_20660"/>
</dbReference>
<dbReference type="Gramene" id="Pp3c6_20660V3.5">
    <property type="protein sequence ID" value="Pp3c6_20660V3.5"/>
    <property type="gene ID" value="Pp3c6_20660"/>
</dbReference>
<dbReference type="Gramene" id="Pp3c6_20660V3.6">
    <property type="protein sequence ID" value="Pp3c6_20660V3.6"/>
    <property type="gene ID" value="Pp3c6_20660"/>
</dbReference>
<dbReference type="Gramene" id="Pp3c6_20660V3.7">
    <property type="protein sequence ID" value="Pp3c6_20660V3.7"/>
    <property type="gene ID" value="Pp3c6_20660"/>
</dbReference>
<dbReference type="Gramene" id="Pp3c6_20660V3.8">
    <property type="protein sequence ID" value="Pp3c6_20660V3.8"/>
    <property type="gene ID" value="Pp3c6_20660"/>
</dbReference>
<dbReference type="Gramene" id="Pp3c6_20660V3.9">
    <property type="protein sequence ID" value="Pp3c6_20660V3.9"/>
    <property type="gene ID" value="Pp3c6_20660"/>
</dbReference>
<dbReference type="eggNOG" id="ENOG502QTTS">
    <property type="taxonomic scope" value="Eukaryota"/>
</dbReference>
<dbReference type="HOGENOM" id="CLU_103961_1_0_1"/>
<dbReference type="InParanoid" id="A9RKK4"/>
<dbReference type="OMA" id="IAMPRHT"/>
<dbReference type="OrthoDB" id="828022at2759"/>
<dbReference type="Proteomes" id="UP000006727">
    <property type="component" value="Chromosome 6"/>
</dbReference>
<dbReference type="GO" id="GO:0016020">
    <property type="term" value="C:membrane"/>
    <property type="evidence" value="ECO:0000318"/>
    <property type="project" value="GO_Central"/>
</dbReference>
<dbReference type="GO" id="GO:0005886">
    <property type="term" value="C:plasma membrane"/>
    <property type="evidence" value="ECO:0007669"/>
    <property type="project" value="UniProtKB-SubCell"/>
</dbReference>
<dbReference type="InterPro" id="IPR006702">
    <property type="entry name" value="CASP_dom"/>
</dbReference>
<dbReference type="InterPro" id="IPR045009">
    <property type="entry name" value="CASPL-5"/>
</dbReference>
<dbReference type="PANTHER" id="PTHR32021:SF1">
    <property type="entry name" value="CASP-LIKE PROTEIN 5A1"/>
    <property type="match status" value="1"/>
</dbReference>
<dbReference type="PANTHER" id="PTHR32021">
    <property type="entry name" value="CASP-LIKE PROTEIN 5B3"/>
    <property type="match status" value="1"/>
</dbReference>
<dbReference type="Pfam" id="PF04535">
    <property type="entry name" value="CASP_dom"/>
    <property type="match status" value="1"/>
</dbReference>
<comment type="subunit">
    <text evidence="1">Homodimer and heterodimers.</text>
</comment>
<comment type="subcellular location">
    <subcellularLocation>
        <location evidence="1">Cell membrane</location>
        <topology evidence="1">Multi-pass membrane protein</topology>
    </subcellularLocation>
</comment>
<comment type="similarity">
    <text evidence="3">Belongs to the Casparian strip membrane proteins (CASP) family.</text>
</comment>
<comment type="sequence caution" evidence="3">
    <conflict type="erroneous initiation">
        <sequence resource="EMBL-CDS" id="EDQ80663"/>
    </conflict>
    <text>Truncated N-terminus.</text>
</comment>
<accession>A9RKK4</accession>
<sequence>MEATSHPAVHPVAVPPQFQGAGPPAIQMKDFPGSPGTAGGLALRFTQFGFSLISLCIMVSIAGFSSVTAFCFLVATMVFQCIWSLCLGALDIYALLTQRSFRNPLIVSLFVVGDWVTSTMTFAGACAAAGITVLIDNDLEQCGPNHCGRFEAAAAMAFMSWTATTLSFCLSFWLLASCR</sequence>
<evidence type="ECO:0000250" key="1"/>
<evidence type="ECO:0000255" key="2"/>
<evidence type="ECO:0000305" key="3"/>
<reference key="1">
    <citation type="journal article" date="2008" name="Science">
        <title>The Physcomitrella genome reveals evolutionary insights into the conquest of land by plants.</title>
        <authorList>
            <person name="Rensing S.A."/>
            <person name="Lang D."/>
            <person name="Zimmer A.D."/>
            <person name="Terry A."/>
            <person name="Salamov A."/>
            <person name="Shapiro H."/>
            <person name="Nishiyama T."/>
            <person name="Perroud P.-F."/>
            <person name="Lindquist E.A."/>
            <person name="Kamisugi Y."/>
            <person name="Tanahashi T."/>
            <person name="Sakakibara K."/>
            <person name="Fujita T."/>
            <person name="Oishi K."/>
            <person name="Shin-I T."/>
            <person name="Kuroki Y."/>
            <person name="Toyoda A."/>
            <person name="Suzuki Y."/>
            <person name="Hashimoto S.-I."/>
            <person name="Yamaguchi K."/>
            <person name="Sugano S."/>
            <person name="Kohara Y."/>
            <person name="Fujiyama A."/>
            <person name="Anterola A."/>
            <person name="Aoki S."/>
            <person name="Ashton N."/>
            <person name="Barbazuk W.B."/>
            <person name="Barker E."/>
            <person name="Bennetzen J.L."/>
            <person name="Blankenship R."/>
            <person name="Cho S.H."/>
            <person name="Dutcher S.K."/>
            <person name="Estelle M."/>
            <person name="Fawcett J.A."/>
            <person name="Gundlach H."/>
            <person name="Hanada K."/>
            <person name="Heyl A."/>
            <person name="Hicks K.A."/>
            <person name="Hughes J."/>
            <person name="Lohr M."/>
            <person name="Mayer K."/>
            <person name="Melkozernov A."/>
            <person name="Murata T."/>
            <person name="Nelson D.R."/>
            <person name="Pils B."/>
            <person name="Prigge M."/>
            <person name="Reiss B."/>
            <person name="Renner T."/>
            <person name="Rombauts S."/>
            <person name="Rushton P.J."/>
            <person name="Sanderfoot A."/>
            <person name="Schween G."/>
            <person name="Shiu S.-H."/>
            <person name="Stueber K."/>
            <person name="Theodoulou F.L."/>
            <person name="Tu H."/>
            <person name="Van de Peer Y."/>
            <person name="Verrier P.J."/>
            <person name="Waters E."/>
            <person name="Wood A."/>
            <person name="Yang L."/>
            <person name="Cove D."/>
            <person name="Cuming A.C."/>
            <person name="Hasebe M."/>
            <person name="Lucas S."/>
            <person name="Mishler B.D."/>
            <person name="Reski R."/>
            <person name="Grigoriev I.V."/>
            <person name="Quatrano R.S."/>
            <person name="Boore J.L."/>
        </authorList>
    </citation>
    <scope>NUCLEOTIDE SEQUENCE [LARGE SCALE GENOMIC DNA]</scope>
    <source>
        <strain>cv. Gransden 2004</strain>
    </source>
</reference>
<reference key="2">
    <citation type="journal article" date="2014" name="Plant Physiol.">
        <title>Functional and evolutionary analysis of the CASPARIAN STRIP MEMBRANE DOMAIN PROTEIN family.</title>
        <authorList>
            <person name="Roppolo D."/>
            <person name="Boeckmann B."/>
            <person name="Pfister A."/>
            <person name="Boutet E."/>
            <person name="Rubio M.C."/>
            <person name="Denervaud-Tendon V."/>
            <person name="Vermeer J.E."/>
            <person name="Gheyselinck J."/>
            <person name="Xenarios I."/>
            <person name="Geldner N."/>
        </authorList>
    </citation>
    <scope>GENE FAMILY</scope>
    <scope>NOMENCLATURE</scope>
</reference>
<gene>
    <name type="ORF">PHYPADRAFT_115765</name>
</gene>
<protein>
    <recommendedName>
        <fullName>CASP-like protein 5A2</fullName>
        <shortName>PpCASPL5A2</shortName>
    </recommendedName>
</protein>
<proteinExistence type="inferred from homology"/>
<keyword id="KW-1003">Cell membrane</keyword>
<keyword id="KW-0472">Membrane</keyword>
<keyword id="KW-1185">Reference proteome</keyword>
<keyword id="KW-0812">Transmembrane</keyword>
<keyword id="KW-1133">Transmembrane helix</keyword>
<name>CSPLF_PHYPA</name>
<feature type="chain" id="PRO_0000418673" description="CASP-like protein 5A2">
    <location>
        <begin position="1"/>
        <end position="179"/>
    </location>
</feature>
<feature type="topological domain" description="Cytoplasmic" evidence="2">
    <location>
        <begin position="1"/>
        <end position="54"/>
    </location>
</feature>
<feature type="transmembrane region" description="Helical" evidence="2">
    <location>
        <begin position="55"/>
        <end position="75"/>
    </location>
</feature>
<feature type="transmembrane region" description="Helical" evidence="2">
    <location>
        <begin position="76"/>
        <end position="96"/>
    </location>
</feature>
<feature type="topological domain" description="Cytoplasmic" evidence="2">
    <location>
        <begin position="97"/>
        <end position="114"/>
    </location>
</feature>
<feature type="transmembrane region" description="Helical" evidence="2">
    <location>
        <begin position="115"/>
        <end position="135"/>
    </location>
</feature>
<feature type="topological domain" description="Extracellular" evidence="2">
    <location>
        <begin position="136"/>
        <end position="154"/>
    </location>
</feature>
<feature type="transmembrane region" description="Helical" evidence="2">
    <location>
        <begin position="155"/>
        <end position="175"/>
    </location>
</feature>
<feature type="topological domain" description="Cytoplasmic" evidence="2">
    <location>
        <begin position="176"/>
        <end position="179"/>
    </location>
</feature>
<organism>
    <name type="scientific">Physcomitrium patens</name>
    <name type="common">Spreading-leaved earth moss</name>
    <name type="synonym">Physcomitrella patens</name>
    <dbReference type="NCBI Taxonomy" id="3218"/>
    <lineage>
        <taxon>Eukaryota</taxon>
        <taxon>Viridiplantae</taxon>
        <taxon>Streptophyta</taxon>
        <taxon>Embryophyta</taxon>
        <taxon>Bryophyta</taxon>
        <taxon>Bryophytina</taxon>
        <taxon>Bryopsida</taxon>
        <taxon>Funariidae</taxon>
        <taxon>Funariales</taxon>
        <taxon>Funariaceae</taxon>
        <taxon>Physcomitrium</taxon>
    </lineage>
</organism>